<accession>Q71S10</accession>
<organism>
    <name type="scientific">Macaca mulatta</name>
    <name type="common">Rhesus macaque</name>
    <dbReference type="NCBI Taxonomy" id="9544"/>
    <lineage>
        <taxon>Eukaryota</taxon>
        <taxon>Metazoa</taxon>
        <taxon>Chordata</taxon>
        <taxon>Craniata</taxon>
        <taxon>Vertebrata</taxon>
        <taxon>Euteleostomi</taxon>
        <taxon>Mammalia</taxon>
        <taxon>Eutheria</taxon>
        <taxon>Euarchontoglires</taxon>
        <taxon>Primates</taxon>
        <taxon>Haplorrhini</taxon>
        <taxon>Catarrhini</taxon>
        <taxon>Cercopithecidae</taxon>
        <taxon>Cercopithecinae</taxon>
        <taxon>Macaca</taxon>
    </lineage>
</organism>
<protein>
    <recommendedName>
        <fullName>SH2 domain-containing protein 1A</fullName>
    </recommendedName>
</protein>
<proteinExistence type="evidence at transcript level"/>
<sequence>MDAVAVYHGKISRETGEKLLLATGLDGSYLLRDSESVPGVYCLCVLYHGYIYTYRVSQTETGSWSAETAPGVHKRYFRKIKNLISAFQKPDQGIVIPLQYPVEKKSSARSTQGTTGIREDPDVCLKAP</sequence>
<evidence type="ECO:0000250" key="1">
    <source>
        <dbReference type="UniProtKB" id="B2RZ59"/>
    </source>
</evidence>
<evidence type="ECO:0000250" key="2">
    <source>
        <dbReference type="UniProtKB" id="O60880"/>
    </source>
</evidence>
<evidence type="ECO:0000250" key="3">
    <source>
        <dbReference type="UniProtKB" id="O88890"/>
    </source>
</evidence>
<evidence type="ECO:0000255" key="4">
    <source>
        <dbReference type="PROSITE-ProRule" id="PRU00191"/>
    </source>
</evidence>
<evidence type="ECO:0000256" key="5">
    <source>
        <dbReference type="SAM" id="MobiDB-lite"/>
    </source>
</evidence>
<dbReference type="EMBL" id="AF322912">
    <property type="protein sequence ID" value="AAK11578.1"/>
    <property type="molecule type" value="mRNA"/>
</dbReference>
<dbReference type="RefSeq" id="NP_001028009.1">
    <property type="nucleotide sequence ID" value="NM_001032837.1"/>
</dbReference>
<dbReference type="SMR" id="Q71S10"/>
<dbReference type="FunCoup" id="Q71S10">
    <property type="interactions" value="532"/>
</dbReference>
<dbReference type="STRING" id="9544.ENSMMUP00000009960"/>
<dbReference type="PaxDb" id="9544-ENSMMUP00000009961"/>
<dbReference type="Ensembl" id="ENSMMUT00000103918.1">
    <property type="protein sequence ID" value="ENSMMUP00000071775.1"/>
    <property type="gene ID" value="ENSMMUG00000007585.4"/>
</dbReference>
<dbReference type="GeneID" id="574156"/>
<dbReference type="KEGG" id="mcc:574156"/>
<dbReference type="CTD" id="4068"/>
<dbReference type="VEuPathDB" id="HostDB:ENSMMUG00000007585"/>
<dbReference type="VGNC" id="VGNC:97828">
    <property type="gene designation" value="SH2D1A"/>
</dbReference>
<dbReference type="eggNOG" id="KOG0565">
    <property type="taxonomic scope" value="Eukaryota"/>
</dbReference>
<dbReference type="GeneTree" id="ENSGT00940000155920"/>
<dbReference type="HOGENOM" id="CLU_125532_1_0_1"/>
<dbReference type="InParanoid" id="Q71S10"/>
<dbReference type="OMA" id="YSPGRNE"/>
<dbReference type="OrthoDB" id="10053436at2759"/>
<dbReference type="TreeFam" id="TF343096"/>
<dbReference type="Proteomes" id="UP000006718">
    <property type="component" value="Chromosome X"/>
</dbReference>
<dbReference type="Bgee" id="ENSMMUG00000007585">
    <property type="expression patterns" value="Expressed in spleen and 11 other cell types or tissues"/>
</dbReference>
<dbReference type="ExpressionAtlas" id="Q71S10">
    <property type="expression patterns" value="baseline"/>
</dbReference>
<dbReference type="GO" id="GO:0005737">
    <property type="term" value="C:cytoplasm"/>
    <property type="evidence" value="ECO:0007669"/>
    <property type="project" value="UniProtKB-SubCell"/>
</dbReference>
<dbReference type="GO" id="GO:0002250">
    <property type="term" value="P:adaptive immune response"/>
    <property type="evidence" value="ECO:0007669"/>
    <property type="project" value="UniProtKB-KW"/>
</dbReference>
<dbReference type="GO" id="GO:0007267">
    <property type="term" value="P:cell-cell signaling"/>
    <property type="evidence" value="ECO:0007669"/>
    <property type="project" value="InterPro"/>
</dbReference>
<dbReference type="GO" id="GO:0006968">
    <property type="term" value="P:cellular defense response"/>
    <property type="evidence" value="ECO:0007669"/>
    <property type="project" value="InterPro"/>
</dbReference>
<dbReference type="GO" id="GO:0045087">
    <property type="term" value="P:innate immune response"/>
    <property type="evidence" value="ECO:0007669"/>
    <property type="project" value="UniProtKB-KW"/>
</dbReference>
<dbReference type="CDD" id="cd10400">
    <property type="entry name" value="SH2_SAP1a"/>
    <property type="match status" value="1"/>
</dbReference>
<dbReference type="FunFam" id="3.30.505.10:FF:000062">
    <property type="entry name" value="SH2 domain-containing protein 1A"/>
    <property type="match status" value="1"/>
</dbReference>
<dbReference type="Gene3D" id="3.30.505.10">
    <property type="entry name" value="SH2 domain"/>
    <property type="match status" value="1"/>
</dbReference>
<dbReference type="InterPro" id="IPR000980">
    <property type="entry name" value="SH2"/>
</dbReference>
<dbReference type="InterPro" id="IPR036860">
    <property type="entry name" value="SH2_dom_sf"/>
</dbReference>
<dbReference type="InterPro" id="IPR017289">
    <property type="entry name" value="SH2_prot_1A"/>
</dbReference>
<dbReference type="InterPro" id="IPR035876">
    <property type="entry name" value="SH2D1A_SH2"/>
</dbReference>
<dbReference type="PANTHER" id="PTHR46051:SF1">
    <property type="entry name" value="INOSITOL POLYPHOSPHATE-RELATED PHOSPHATASE DOMAIN-CONTAINING PROTEIN"/>
    <property type="match status" value="1"/>
</dbReference>
<dbReference type="PANTHER" id="PTHR46051">
    <property type="entry name" value="SH2 DOMAIN-CONTAINING PROTEIN"/>
    <property type="match status" value="1"/>
</dbReference>
<dbReference type="Pfam" id="PF00017">
    <property type="entry name" value="SH2"/>
    <property type="match status" value="1"/>
</dbReference>
<dbReference type="PIRSF" id="PIRSF037828">
    <property type="entry name" value="SH2_p1A"/>
    <property type="match status" value="1"/>
</dbReference>
<dbReference type="PRINTS" id="PR00401">
    <property type="entry name" value="SH2DOMAIN"/>
</dbReference>
<dbReference type="SMART" id="SM00252">
    <property type="entry name" value="SH2"/>
    <property type="match status" value="1"/>
</dbReference>
<dbReference type="SUPFAM" id="SSF55550">
    <property type="entry name" value="SH2 domain"/>
    <property type="match status" value="1"/>
</dbReference>
<dbReference type="PROSITE" id="PS50001">
    <property type="entry name" value="SH2"/>
    <property type="match status" value="1"/>
</dbReference>
<keyword id="KW-0007">Acetylation</keyword>
<keyword id="KW-1064">Adaptive immunity</keyword>
<keyword id="KW-0963">Cytoplasm</keyword>
<keyword id="KW-0391">Immunity</keyword>
<keyword id="KW-0399">Innate immunity</keyword>
<keyword id="KW-1185">Reference proteome</keyword>
<keyword id="KW-0727">SH2 domain</keyword>
<name>SH21A_MACMU</name>
<reference key="1">
    <citation type="journal article" date="2001" name="J. Biol. Chem.">
        <title>Characterization of SH2D1A missense mutations identified in X-linked lymphoproliferative disease patients.</title>
        <authorList>
            <person name="Morra M."/>
            <person name="Simarro-Grande M."/>
            <person name="Martin M."/>
            <person name="Chen A.S.-I."/>
            <person name="Lanyi A."/>
            <person name="Silander O."/>
            <person name="Calpe S."/>
            <person name="Davis J."/>
            <person name="Pawson T."/>
            <person name="Eck M.J."/>
            <person name="Sumegi J."/>
            <person name="Engel P."/>
            <person name="Li S.-C."/>
            <person name="Terhorst C."/>
        </authorList>
    </citation>
    <scope>NUCLEOTIDE SEQUENCE [MRNA]</scope>
    <source>
        <tissue>Peripheral blood lymphocyte</tissue>
    </source>
</reference>
<gene>
    <name type="primary">SH2D1A</name>
</gene>
<comment type="function">
    <text evidence="1 2 3">Cytoplasmic adapter regulating receptors of the signaling lymphocytic activation molecule (SLAM) family such as SLAMF1, CD244, LY9, CD84, SLAMF6 and SLAMF7. In SLAM signaling seems to cooperate with SH2D1B/EAT-2. Initially it has been proposed that association with SLAMF1 prevents SLAMF1 binding to inhibitory effectors including INPP5D/SHIP1 and PTPN11/SHP-2. However, by simultaneous interactions, recruits FYN which subsequently phosphorylates and activates SLAMF1. Positively regulates CD244/2B4- and CD84-mediated natural killer (NK) cell functions. Can also promote CD48-, SLAMF6 -, LY9-, and SLAMF7-mediated NK cell activation. In the context of NK cell-mediated cytotoxicity enhances conjugate formation with target cells (By similarity). May also regulate the activity of the neurotrophin receptors NTRK1, NTRK2 and NTRK3 (By similarity).</text>
</comment>
<comment type="subunit">
    <text evidence="1 2">Interacts with CD84, CD244, LY9, SLAMF1 and FYN. Interacts with NTRK1, NTRK2 and NTRK3 (By similarity).</text>
</comment>
<comment type="subcellular location">
    <subcellularLocation>
        <location evidence="2">Cytoplasm</location>
    </subcellularLocation>
</comment>
<feature type="chain" id="PRO_0000356883" description="SH2 domain-containing protein 1A">
    <location>
        <begin position="1"/>
        <end position="128"/>
    </location>
</feature>
<feature type="domain" description="SH2" evidence="4">
    <location>
        <begin position="6"/>
        <end position="102"/>
    </location>
</feature>
<feature type="region of interest" description="Interaction with FYN SH3 domain" evidence="3">
    <location>
        <begin position="67"/>
        <end position="92"/>
    </location>
</feature>
<feature type="region of interest" description="Disordered" evidence="5">
    <location>
        <begin position="106"/>
        <end position="128"/>
    </location>
</feature>
<feature type="compositionally biased region" description="Basic and acidic residues" evidence="5">
    <location>
        <begin position="117"/>
        <end position="128"/>
    </location>
</feature>
<feature type="modified residue" description="N6-acetyllysine" evidence="2">
    <location>
        <position position="89"/>
    </location>
</feature>